<dbReference type="EC" id="3.1.26.5" evidence="1"/>
<dbReference type="EMBL" id="CP000936">
    <property type="protein sequence ID" value="ACA36438.1"/>
    <property type="molecule type" value="Genomic_DNA"/>
</dbReference>
<dbReference type="RefSeq" id="WP_000739244.1">
    <property type="nucleotide sequence ID" value="NC_010380.1"/>
</dbReference>
<dbReference type="SMR" id="B1I998"/>
<dbReference type="KEGG" id="spv:SPH_2195"/>
<dbReference type="HOGENOM" id="CLU_117179_9_1_9"/>
<dbReference type="Proteomes" id="UP000002163">
    <property type="component" value="Chromosome"/>
</dbReference>
<dbReference type="GO" id="GO:0030677">
    <property type="term" value="C:ribonuclease P complex"/>
    <property type="evidence" value="ECO:0007669"/>
    <property type="project" value="TreeGrafter"/>
</dbReference>
<dbReference type="GO" id="GO:0042781">
    <property type="term" value="F:3'-tRNA processing endoribonuclease activity"/>
    <property type="evidence" value="ECO:0007669"/>
    <property type="project" value="TreeGrafter"/>
</dbReference>
<dbReference type="GO" id="GO:0004526">
    <property type="term" value="F:ribonuclease P activity"/>
    <property type="evidence" value="ECO:0007669"/>
    <property type="project" value="UniProtKB-UniRule"/>
</dbReference>
<dbReference type="GO" id="GO:0000049">
    <property type="term" value="F:tRNA binding"/>
    <property type="evidence" value="ECO:0007669"/>
    <property type="project" value="UniProtKB-UniRule"/>
</dbReference>
<dbReference type="GO" id="GO:0001682">
    <property type="term" value="P:tRNA 5'-leader removal"/>
    <property type="evidence" value="ECO:0007669"/>
    <property type="project" value="UniProtKB-UniRule"/>
</dbReference>
<dbReference type="FunFam" id="3.30.230.10:FF:000021">
    <property type="entry name" value="Ribonuclease P protein component"/>
    <property type="match status" value="1"/>
</dbReference>
<dbReference type="Gene3D" id="3.30.230.10">
    <property type="match status" value="1"/>
</dbReference>
<dbReference type="HAMAP" id="MF_00227">
    <property type="entry name" value="RNase_P"/>
    <property type="match status" value="1"/>
</dbReference>
<dbReference type="InterPro" id="IPR020568">
    <property type="entry name" value="Ribosomal_Su5_D2-typ_SF"/>
</dbReference>
<dbReference type="InterPro" id="IPR014721">
    <property type="entry name" value="Ribsml_uS5_D2-typ_fold_subgr"/>
</dbReference>
<dbReference type="InterPro" id="IPR000100">
    <property type="entry name" value="RNase_P"/>
</dbReference>
<dbReference type="InterPro" id="IPR020539">
    <property type="entry name" value="RNase_P_CS"/>
</dbReference>
<dbReference type="NCBIfam" id="TIGR00188">
    <property type="entry name" value="rnpA"/>
    <property type="match status" value="1"/>
</dbReference>
<dbReference type="PANTHER" id="PTHR33992">
    <property type="entry name" value="RIBONUCLEASE P PROTEIN COMPONENT"/>
    <property type="match status" value="1"/>
</dbReference>
<dbReference type="PANTHER" id="PTHR33992:SF1">
    <property type="entry name" value="RIBONUCLEASE P PROTEIN COMPONENT"/>
    <property type="match status" value="1"/>
</dbReference>
<dbReference type="Pfam" id="PF00825">
    <property type="entry name" value="Ribonuclease_P"/>
    <property type="match status" value="1"/>
</dbReference>
<dbReference type="SUPFAM" id="SSF54211">
    <property type="entry name" value="Ribosomal protein S5 domain 2-like"/>
    <property type="match status" value="1"/>
</dbReference>
<dbReference type="PROSITE" id="PS00648">
    <property type="entry name" value="RIBONUCLEASE_P"/>
    <property type="match status" value="1"/>
</dbReference>
<proteinExistence type="inferred from homology"/>
<gene>
    <name evidence="1" type="primary">rnpA</name>
    <name type="ordered locus">SPH_2195</name>
</gene>
<sequence>MKKNFRVKREKDFKAIFKEGTSFANRKFVVYQLENQKNHFRVGLSVSKKLGNAVTRNQIKRRIRHIIQNAKGSLVEDVDFVVIARKGVETLGYAEMEKNLLHVLKLSKIYQEGNGSEKETKVD</sequence>
<accession>B1I998</accession>
<reference key="1">
    <citation type="journal article" date="2010" name="Genome Biol.">
        <title>Structure and dynamics of the pan-genome of Streptococcus pneumoniae and closely related species.</title>
        <authorList>
            <person name="Donati C."/>
            <person name="Hiller N.L."/>
            <person name="Tettelin H."/>
            <person name="Muzzi A."/>
            <person name="Croucher N.J."/>
            <person name="Angiuoli S.V."/>
            <person name="Oggioni M."/>
            <person name="Dunning Hotopp J.C."/>
            <person name="Hu F.Z."/>
            <person name="Riley D.R."/>
            <person name="Covacci A."/>
            <person name="Mitchell T.J."/>
            <person name="Bentley S.D."/>
            <person name="Kilian M."/>
            <person name="Ehrlich G.D."/>
            <person name="Rappuoli R."/>
            <person name="Moxon E.R."/>
            <person name="Masignani V."/>
        </authorList>
    </citation>
    <scope>NUCLEOTIDE SEQUENCE [LARGE SCALE GENOMIC DNA]</scope>
    <source>
        <strain>Hungary19A-6</strain>
    </source>
</reference>
<feature type="chain" id="PRO_1000100398" description="Ribonuclease P protein component">
    <location>
        <begin position="1"/>
        <end position="123"/>
    </location>
</feature>
<name>RNPA_STRPI</name>
<evidence type="ECO:0000255" key="1">
    <source>
        <dbReference type="HAMAP-Rule" id="MF_00227"/>
    </source>
</evidence>
<comment type="function">
    <text evidence="1">RNaseP catalyzes the removal of the 5'-leader sequence from pre-tRNA to produce the mature 5'-terminus. It can also cleave other RNA substrates such as 4.5S RNA. The protein component plays an auxiliary but essential role in vivo by binding to the 5'-leader sequence and broadening the substrate specificity of the ribozyme.</text>
</comment>
<comment type="catalytic activity">
    <reaction evidence="1">
        <text>Endonucleolytic cleavage of RNA, removing 5'-extranucleotides from tRNA precursor.</text>
        <dbReference type="EC" id="3.1.26.5"/>
    </reaction>
</comment>
<comment type="subunit">
    <text evidence="1">Consists of a catalytic RNA component (M1 or rnpB) and a protein subunit.</text>
</comment>
<comment type="similarity">
    <text evidence="1">Belongs to the RnpA family.</text>
</comment>
<organism>
    <name type="scientific">Streptococcus pneumoniae (strain Hungary19A-6)</name>
    <dbReference type="NCBI Taxonomy" id="487214"/>
    <lineage>
        <taxon>Bacteria</taxon>
        <taxon>Bacillati</taxon>
        <taxon>Bacillota</taxon>
        <taxon>Bacilli</taxon>
        <taxon>Lactobacillales</taxon>
        <taxon>Streptococcaceae</taxon>
        <taxon>Streptococcus</taxon>
    </lineage>
</organism>
<protein>
    <recommendedName>
        <fullName evidence="1">Ribonuclease P protein component</fullName>
        <shortName evidence="1">RNase P protein</shortName>
        <shortName evidence="1">RNaseP protein</shortName>
        <ecNumber evidence="1">3.1.26.5</ecNumber>
    </recommendedName>
    <alternativeName>
        <fullName evidence="1">Protein C5</fullName>
    </alternativeName>
</protein>
<keyword id="KW-0255">Endonuclease</keyword>
<keyword id="KW-0378">Hydrolase</keyword>
<keyword id="KW-0540">Nuclease</keyword>
<keyword id="KW-0694">RNA-binding</keyword>
<keyword id="KW-0819">tRNA processing</keyword>